<evidence type="ECO:0000255" key="1">
    <source>
        <dbReference type="HAMAP-Rule" id="MF_00151"/>
    </source>
</evidence>
<feature type="chain" id="PRO_1000076793" description="Phosphopantetheine adenylyltransferase">
    <location>
        <begin position="1"/>
        <end position="165"/>
    </location>
</feature>
<feature type="binding site" evidence="1">
    <location>
        <begin position="9"/>
        <end position="10"/>
    </location>
    <ligand>
        <name>ATP</name>
        <dbReference type="ChEBI" id="CHEBI:30616"/>
    </ligand>
</feature>
<feature type="binding site" evidence="1">
    <location>
        <position position="9"/>
    </location>
    <ligand>
        <name>substrate</name>
    </ligand>
</feature>
<feature type="binding site" evidence="1">
    <location>
        <position position="17"/>
    </location>
    <ligand>
        <name>ATP</name>
        <dbReference type="ChEBI" id="CHEBI:30616"/>
    </ligand>
</feature>
<feature type="binding site" evidence="1">
    <location>
        <position position="41"/>
    </location>
    <ligand>
        <name>substrate</name>
    </ligand>
</feature>
<feature type="binding site" evidence="1">
    <location>
        <position position="73"/>
    </location>
    <ligand>
        <name>substrate</name>
    </ligand>
</feature>
<feature type="binding site" evidence="1">
    <location>
        <position position="87"/>
    </location>
    <ligand>
        <name>substrate</name>
    </ligand>
</feature>
<feature type="binding site" evidence="1">
    <location>
        <begin position="88"/>
        <end position="90"/>
    </location>
    <ligand>
        <name>ATP</name>
        <dbReference type="ChEBI" id="CHEBI:30616"/>
    </ligand>
</feature>
<feature type="binding site" evidence="1">
    <location>
        <position position="98"/>
    </location>
    <ligand>
        <name>ATP</name>
        <dbReference type="ChEBI" id="CHEBI:30616"/>
    </ligand>
</feature>
<feature type="binding site" evidence="1">
    <location>
        <begin position="123"/>
        <end position="129"/>
    </location>
    <ligand>
        <name>ATP</name>
        <dbReference type="ChEBI" id="CHEBI:30616"/>
    </ligand>
</feature>
<feature type="site" description="Transition state stabilizer" evidence="1">
    <location>
        <position position="17"/>
    </location>
</feature>
<protein>
    <recommendedName>
        <fullName evidence="1">Phosphopantetheine adenylyltransferase</fullName>
        <ecNumber evidence="1">2.7.7.3</ecNumber>
    </recommendedName>
    <alternativeName>
        <fullName evidence="1">Dephospho-CoA pyrophosphorylase</fullName>
    </alternativeName>
    <alternativeName>
        <fullName evidence="1">Pantetheine-phosphate adenylyltransferase</fullName>
        <shortName evidence="1">PPAT</shortName>
    </alternativeName>
</protein>
<reference key="1">
    <citation type="journal article" date="2010" name="J. Bacteriol.">
        <title>Genome sequence of the dioxin-mineralizing bacterium Sphingomonas wittichii RW1.</title>
        <authorList>
            <person name="Miller T.R."/>
            <person name="Delcher A.L."/>
            <person name="Salzberg S.L."/>
            <person name="Saunders E."/>
            <person name="Detter J.C."/>
            <person name="Halden R.U."/>
        </authorList>
    </citation>
    <scope>NUCLEOTIDE SEQUENCE [LARGE SCALE GENOMIC DNA]</scope>
    <source>
        <strain>DSM 6014 / CCUG 31198 / JCM 15750 / NBRC 105917 / EY 4224 / RW1</strain>
    </source>
</reference>
<dbReference type="EC" id="2.7.7.3" evidence="1"/>
<dbReference type="EMBL" id="CP000699">
    <property type="protein sequence ID" value="ABQ66396.1"/>
    <property type="molecule type" value="Genomic_DNA"/>
</dbReference>
<dbReference type="SMR" id="A5V280"/>
<dbReference type="STRING" id="392499.Swit_0023"/>
<dbReference type="PaxDb" id="392499-Swit_0023"/>
<dbReference type="KEGG" id="swi:Swit_0023"/>
<dbReference type="eggNOG" id="COG0669">
    <property type="taxonomic scope" value="Bacteria"/>
</dbReference>
<dbReference type="HOGENOM" id="CLU_100149_0_1_5"/>
<dbReference type="OrthoDB" id="9806661at2"/>
<dbReference type="UniPathway" id="UPA00241">
    <property type="reaction ID" value="UER00355"/>
</dbReference>
<dbReference type="Proteomes" id="UP000001989">
    <property type="component" value="Chromosome"/>
</dbReference>
<dbReference type="GO" id="GO:0005737">
    <property type="term" value="C:cytoplasm"/>
    <property type="evidence" value="ECO:0007669"/>
    <property type="project" value="UniProtKB-SubCell"/>
</dbReference>
<dbReference type="GO" id="GO:0005524">
    <property type="term" value="F:ATP binding"/>
    <property type="evidence" value="ECO:0007669"/>
    <property type="project" value="UniProtKB-KW"/>
</dbReference>
<dbReference type="GO" id="GO:0004595">
    <property type="term" value="F:pantetheine-phosphate adenylyltransferase activity"/>
    <property type="evidence" value="ECO:0007669"/>
    <property type="project" value="UniProtKB-UniRule"/>
</dbReference>
<dbReference type="GO" id="GO:0015937">
    <property type="term" value="P:coenzyme A biosynthetic process"/>
    <property type="evidence" value="ECO:0007669"/>
    <property type="project" value="UniProtKB-UniRule"/>
</dbReference>
<dbReference type="CDD" id="cd02163">
    <property type="entry name" value="PPAT"/>
    <property type="match status" value="1"/>
</dbReference>
<dbReference type="Gene3D" id="3.40.50.620">
    <property type="entry name" value="HUPs"/>
    <property type="match status" value="1"/>
</dbReference>
<dbReference type="HAMAP" id="MF_00151">
    <property type="entry name" value="PPAT_bact"/>
    <property type="match status" value="1"/>
</dbReference>
<dbReference type="InterPro" id="IPR004821">
    <property type="entry name" value="Cyt_trans-like"/>
</dbReference>
<dbReference type="InterPro" id="IPR001980">
    <property type="entry name" value="PPAT"/>
</dbReference>
<dbReference type="InterPro" id="IPR014729">
    <property type="entry name" value="Rossmann-like_a/b/a_fold"/>
</dbReference>
<dbReference type="NCBIfam" id="TIGR01510">
    <property type="entry name" value="coaD_prev_kdtB"/>
    <property type="match status" value="1"/>
</dbReference>
<dbReference type="NCBIfam" id="TIGR00125">
    <property type="entry name" value="cyt_tran_rel"/>
    <property type="match status" value="1"/>
</dbReference>
<dbReference type="PANTHER" id="PTHR21342">
    <property type="entry name" value="PHOSPHOPANTETHEINE ADENYLYLTRANSFERASE"/>
    <property type="match status" value="1"/>
</dbReference>
<dbReference type="PANTHER" id="PTHR21342:SF1">
    <property type="entry name" value="PHOSPHOPANTETHEINE ADENYLYLTRANSFERASE"/>
    <property type="match status" value="1"/>
</dbReference>
<dbReference type="Pfam" id="PF01467">
    <property type="entry name" value="CTP_transf_like"/>
    <property type="match status" value="1"/>
</dbReference>
<dbReference type="PRINTS" id="PR01020">
    <property type="entry name" value="LPSBIOSNTHSS"/>
</dbReference>
<dbReference type="SUPFAM" id="SSF52374">
    <property type="entry name" value="Nucleotidylyl transferase"/>
    <property type="match status" value="1"/>
</dbReference>
<accession>A5V280</accession>
<keyword id="KW-0067">ATP-binding</keyword>
<keyword id="KW-0173">Coenzyme A biosynthesis</keyword>
<keyword id="KW-0963">Cytoplasm</keyword>
<keyword id="KW-0460">Magnesium</keyword>
<keyword id="KW-0547">Nucleotide-binding</keyword>
<keyword id="KW-0548">Nucleotidyltransferase</keyword>
<keyword id="KW-1185">Reference proteome</keyword>
<keyword id="KW-0808">Transferase</keyword>
<gene>
    <name evidence="1" type="primary">coaD</name>
    <name type="ordered locus">Swit_0023</name>
</gene>
<comment type="function">
    <text evidence="1">Reversibly transfers an adenylyl group from ATP to 4'-phosphopantetheine, yielding dephospho-CoA (dPCoA) and pyrophosphate.</text>
</comment>
<comment type="catalytic activity">
    <reaction evidence="1">
        <text>(R)-4'-phosphopantetheine + ATP + H(+) = 3'-dephospho-CoA + diphosphate</text>
        <dbReference type="Rhea" id="RHEA:19801"/>
        <dbReference type="ChEBI" id="CHEBI:15378"/>
        <dbReference type="ChEBI" id="CHEBI:30616"/>
        <dbReference type="ChEBI" id="CHEBI:33019"/>
        <dbReference type="ChEBI" id="CHEBI:57328"/>
        <dbReference type="ChEBI" id="CHEBI:61723"/>
        <dbReference type="EC" id="2.7.7.3"/>
    </reaction>
</comment>
<comment type="cofactor">
    <cofactor evidence="1">
        <name>Mg(2+)</name>
        <dbReference type="ChEBI" id="CHEBI:18420"/>
    </cofactor>
</comment>
<comment type="pathway">
    <text evidence="1">Cofactor biosynthesis; coenzyme A biosynthesis; CoA from (R)-pantothenate: step 4/5.</text>
</comment>
<comment type="subunit">
    <text evidence="1">Homohexamer.</text>
</comment>
<comment type="subcellular location">
    <subcellularLocation>
        <location evidence="1">Cytoplasm</location>
    </subcellularLocation>
</comment>
<comment type="similarity">
    <text evidence="1">Belongs to the bacterial CoaD family.</text>
</comment>
<organism>
    <name type="scientific">Rhizorhabdus wittichii (strain DSM 6014 / CCUG 31198 / JCM 15750 / NBRC 105917 / EY 4224 / RW1)</name>
    <name type="common">Sphingomonas wittichii</name>
    <dbReference type="NCBI Taxonomy" id="392499"/>
    <lineage>
        <taxon>Bacteria</taxon>
        <taxon>Pseudomonadati</taxon>
        <taxon>Pseudomonadota</taxon>
        <taxon>Alphaproteobacteria</taxon>
        <taxon>Sphingomonadales</taxon>
        <taxon>Sphingomonadaceae</taxon>
        <taxon>Rhizorhabdus</taxon>
    </lineage>
</organism>
<sequence>MRTGVYPGTFDPITLGHMDIIRRGAKLVDKLVIGVTTNASKSPMFTVEERLAMVRRETADLPGVEVVAFDSLLMDFAESMGAAIIVRGLRAVADFEYEYQMAGMNQQLNNRVETVFLMADVALQPIASRLVKEIALYGGAIDRFVPKRVVQEVVARVEKIGKKGS</sequence>
<name>COAD_RHIWR</name>
<proteinExistence type="inferred from homology"/>